<accession>Q3MHX1</accession>
<keyword id="KW-0968">Cytoplasmic vesicle</keyword>
<keyword id="KW-1185">Reference proteome</keyword>
<keyword id="KW-0804">Transcription</keyword>
<keyword id="KW-0805">Transcription regulation</keyword>
<keyword id="KW-0833">Ubl conjugation pathway</keyword>
<gene>
    <name type="primary">COMMD7</name>
</gene>
<comment type="function">
    <text evidence="1">Scaffold protein in the commander complex that is essential for endosomal recycling of transmembrane cargos; the commander complex is composed of the CCC subcomplex and the retriever subcomplex (By similarity). May modulate activity of cullin-RING E3 ubiquitin ligase (CRL) complexes (By similarity). Associates with the NF-kappa-B complex and suppresses its transcriptional activity (By similarity).</text>
</comment>
<comment type="subunit">
    <text evidence="1">Component of the commander complex consisting of the CCC subcomplex and the retriever subcomplex (By similarity). Component of the CCC (COMMD/CCDC22/CCDC93) subcomplex consisting of COMMD1, COMMD2, COMMD3, COMMD4, COMMD5, COMMD6, COMMD7, COMMD8, COMMD9, COMMD10, CCDC22 and CCDC93; within the complex forms a heterodimer with COMMD9 (By similarity). Interacts with RELA (By similarity). Interacts with CCDC22, CCDC93, SCNN1B, CUL7 (By similarity).</text>
</comment>
<comment type="subcellular location">
    <subcellularLocation>
        <location evidence="1">Cytoplasmic vesicle</location>
    </subcellularLocation>
</comment>
<comment type="similarity">
    <text evidence="3">Belongs to the COMM domain-containing protein 7 family.</text>
</comment>
<organism>
    <name type="scientific">Bos taurus</name>
    <name type="common">Bovine</name>
    <dbReference type="NCBI Taxonomy" id="9913"/>
    <lineage>
        <taxon>Eukaryota</taxon>
        <taxon>Metazoa</taxon>
        <taxon>Chordata</taxon>
        <taxon>Craniata</taxon>
        <taxon>Vertebrata</taxon>
        <taxon>Euteleostomi</taxon>
        <taxon>Mammalia</taxon>
        <taxon>Eutheria</taxon>
        <taxon>Laurasiatheria</taxon>
        <taxon>Artiodactyla</taxon>
        <taxon>Ruminantia</taxon>
        <taxon>Pecora</taxon>
        <taxon>Bovidae</taxon>
        <taxon>Bovinae</taxon>
        <taxon>Bos</taxon>
    </lineage>
</organism>
<evidence type="ECO:0000250" key="1">
    <source>
        <dbReference type="UniProtKB" id="Q86VX2"/>
    </source>
</evidence>
<evidence type="ECO:0000255" key="2">
    <source>
        <dbReference type="PROSITE-ProRule" id="PRU00602"/>
    </source>
</evidence>
<evidence type="ECO:0000305" key="3"/>
<protein>
    <recommendedName>
        <fullName>COMM domain-containing protein 7</fullName>
    </recommendedName>
</protein>
<sequence>MGRLHCTQDPVPEAVGGDMQQLNQLSAQQFSALTEVLFHFLTEPKEVERFLAQLSEFAATNQISLGPLRSIVKSLLLVPNGALKKGLTAEQVRADFMTLGLSEEKAIYFSEKWKQNAPTLARWAVGQTLMINQLVDMEWKFGVTSGSSELEKVGSIFLQLKLVVKKGNQTENVYIELTLPQFYSFLHEMERVRTSMECFS</sequence>
<reference key="1">
    <citation type="submission" date="2005-09" db="EMBL/GenBank/DDBJ databases">
        <authorList>
            <consortium name="NIH - Mammalian Gene Collection (MGC) project"/>
        </authorList>
    </citation>
    <scope>NUCLEOTIDE SEQUENCE [LARGE SCALE MRNA]</scope>
    <source>
        <strain>Hereford</strain>
        <tissue>Ascending colon</tissue>
    </source>
</reference>
<name>COMD7_BOVIN</name>
<dbReference type="EMBL" id="BC104576">
    <property type="protein sequence ID" value="AAI04577.1"/>
    <property type="molecule type" value="mRNA"/>
</dbReference>
<dbReference type="RefSeq" id="NP_001030368.1">
    <property type="nucleotide sequence ID" value="NM_001035291.1"/>
</dbReference>
<dbReference type="SMR" id="Q3MHX1"/>
<dbReference type="FunCoup" id="Q3MHX1">
    <property type="interactions" value="1966"/>
</dbReference>
<dbReference type="STRING" id="9913.ENSBTAP00000021846"/>
<dbReference type="PaxDb" id="9913-ENSBTAP00000021846"/>
<dbReference type="Ensembl" id="ENSBTAT00000021846.5">
    <property type="protein sequence ID" value="ENSBTAP00000021846.3"/>
    <property type="gene ID" value="ENSBTAG00000016427.5"/>
</dbReference>
<dbReference type="GeneID" id="514295"/>
<dbReference type="KEGG" id="bta:514295"/>
<dbReference type="CTD" id="149951"/>
<dbReference type="VEuPathDB" id="HostDB:ENSBTAG00000016427"/>
<dbReference type="VGNC" id="VGNC:27587">
    <property type="gene designation" value="COMMD7"/>
</dbReference>
<dbReference type="eggNOG" id="ENOG502QQ17">
    <property type="taxonomic scope" value="Eukaryota"/>
</dbReference>
<dbReference type="GeneTree" id="ENSGT00390000012419"/>
<dbReference type="HOGENOM" id="CLU_118172_0_0_1"/>
<dbReference type="InParanoid" id="Q3MHX1"/>
<dbReference type="OMA" id="SQQWGEH"/>
<dbReference type="OrthoDB" id="76101at2759"/>
<dbReference type="TreeFam" id="TF329046"/>
<dbReference type="Reactome" id="R-BTA-8951664">
    <property type="pathway name" value="Neddylation"/>
</dbReference>
<dbReference type="Proteomes" id="UP000009136">
    <property type="component" value="Chromosome 13"/>
</dbReference>
<dbReference type="Bgee" id="ENSBTAG00000016427">
    <property type="expression patterns" value="Expressed in thyroid gland and 107 other cell types or tissues"/>
</dbReference>
<dbReference type="GO" id="GO:0031410">
    <property type="term" value="C:cytoplasmic vesicle"/>
    <property type="evidence" value="ECO:0007669"/>
    <property type="project" value="UniProtKB-KW"/>
</dbReference>
<dbReference type="GO" id="GO:0051059">
    <property type="term" value="F:NF-kappaB binding"/>
    <property type="evidence" value="ECO:0000318"/>
    <property type="project" value="GO_Central"/>
</dbReference>
<dbReference type="GO" id="GO:0033209">
    <property type="term" value="P:tumor necrosis factor-mediated signaling pathway"/>
    <property type="evidence" value="ECO:0000318"/>
    <property type="project" value="GO_Central"/>
</dbReference>
<dbReference type="CDD" id="cd04755">
    <property type="entry name" value="Commd7"/>
    <property type="match status" value="1"/>
</dbReference>
<dbReference type="InterPro" id="IPR017920">
    <property type="entry name" value="COMM"/>
</dbReference>
<dbReference type="InterPro" id="IPR047155">
    <property type="entry name" value="COMMD4/6/7/8"/>
</dbReference>
<dbReference type="InterPro" id="IPR037358">
    <property type="entry name" value="COMMD7"/>
</dbReference>
<dbReference type="PANTHER" id="PTHR16231">
    <property type="entry name" value="COMM DOMAIN-CONTAINING PROTEIN 4-8 FAMILY MEMBER"/>
    <property type="match status" value="1"/>
</dbReference>
<dbReference type="PANTHER" id="PTHR16231:SF2">
    <property type="entry name" value="COMM DOMAIN-CONTAINING PROTEIN 7"/>
    <property type="match status" value="1"/>
</dbReference>
<dbReference type="Pfam" id="PF07258">
    <property type="entry name" value="COMM_domain"/>
    <property type="match status" value="1"/>
</dbReference>
<dbReference type="Pfam" id="PF21672">
    <property type="entry name" value="COMM_HN"/>
    <property type="match status" value="1"/>
</dbReference>
<dbReference type="PROSITE" id="PS51269">
    <property type="entry name" value="COMM"/>
    <property type="match status" value="1"/>
</dbReference>
<feature type="chain" id="PRO_0000260184" description="COMM domain-containing protein 7">
    <location>
        <begin position="1"/>
        <end position="200"/>
    </location>
</feature>
<feature type="domain" description="COMM" evidence="2">
    <location>
        <begin position="133"/>
        <end position="200"/>
    </location>
</feature>
<proteinExistence type="evidence at transcript level"/>